<proteinExistence type="inferred from homology"/>
<protein>
    <recommendedName>
        <fullName evidence="1">CTP synthase</fullName>
        <ecNumber evidence="1">6.3.4.2</ecNumber>
    </recommendedName>
    <alternativeName>
        <fullName evidence="1">Cytidine 5'-triphosphate synthase</fullName>
    </alternativeName>
    <alternativeName>
        <fullName evidence="1">Cytidine triphosphate synthetase</fullName>
        <shortName evidence="1">CTP synthetase</shortName>
        <shortName evidence="1">CTPS</shortName>
    </alternativeName>
    <alternativeName>
        <fullName evidence="1">UTP--ammonia ligase</fullName>
    </alternativeName>
</protein>
<feature type="chain" id="PRO_0000266240" description="CTP synthase">
    <location>
        <begin position="1"/>
        <end position="546"/>
    </location>
</feature>
<feature type="domain" description="Glutamine amidotransferase type-1" evidence="1">
    <location>
        <begin position="292"/>
        <end position="534"/>
    </location>
</feature>
<feature type="region of interest" description="Amidoligase domain" evidence="1">
    <location>
        <begin position="1"/>
        <end position="267"/>
    </location>
</feature>
<feature type="active site" description="Nucleophile; for glutamine hydrolysis" evidence="1">
    <location>
        <position position="381"/>
    </location>
</feature>
<feature type="active site" evidence="1">
    <location>
        <position position="507"/>
    </location>
</feature>
<feature type="active site" evidence="1">
    <location>
        <position position="509"/>
    </location>
</feature>
<feature type="binding site" evidence="1">
    <location>
        <position position="13"/>
    </location>
    <ligand>
        <name>CTP</name>
        <dbReference type="ChEBI" id="CHEBI:37563"/>
        <note>allosteric inhibitor</note>
    </ligand>
</feature>
<feature type="binding site" evidence="1">
    <location>
        <position position="13"/>
    </location>
    <ligand>
        <name>UTP</name>
        <dbReference type="ChEBI" id="CHEBI:46398"/>
    </ligand>
</feature>
<feature type="binding site" evidence="1">
    <location>
        <begin position="14"/>
        <end position="19"/>
    </location>
    <ligand>
        <name>ATP</name>
        <dbReference type="ChEBI" id="CHEBI:30616"/>
    </ligand>
</feature>
<feature type="binding site" evidence="1">
    <location>
        <position position="54"/>
    </location>
    <ligand>
        <name>L-glutamine</name>
        <dbReference type="ChEBI" id="CHEBI:58359"/>
    </ligand>
</feature>
<feature type="binding site" evidence="1">
    <location>
        <position position="71"/>
    </location>
    <ligand>
        <name>ATP</name>
        <dbReference type="ChEBI" id="CHEBI:30616"/>
    </ligand>
</feature>
<feature type="binding site" evidence="1">
    <location>
        <position position="71"/>
    </location>
    <ligand>
        <name>Mg(2+)</name>
        <dbReference type="ChEBI" id="CHEBI:18420"/>
    </ligand>
</feature>
<feature type="binding site" evidence="1">
    <location>
        <position position="141"/>
    </location>
    <ligand>
        <name>Mg(2+)</name>
        <dbReference type="ChEBI" id="CHEBI:18420"/>
    </ligand>
</feature>
<feature type="binding site" evidence="1">
    <location>
        <begin position="148"/>
        <end position="150"/>
    </location>
    <ligand>
        <name>CTP</name>
        <dbReference type="ChEBI" id="CHEBI:37563"/>
        <note>allosteric inhibitor</note>
    </ligand>
</feature>
<feature type="binding site" evidence="1">
    <location>
        <begin position="188"/>
        <end position="193"/>
    </location>
    <ligand>
        <name>CTP</name>
        <dbReference type="ChEBI" id="CHEBI:37563"/>
        <note>allosteric inhibitor</note>
    </ligand>
</feature>
<feature type="binding site" evidence="1">
    <location>
        <begin position="188"/>
        <end position="193"/>
    </location>
    <ligand>
        <name>UTP</name>
        <dbReference type="ChEBI" id="CHEBI:46398"/>
    </ligand>
</feature>
<feature type="binding site" evidence="1">
    <location>
        <position position="224"/>
    </location>
    <ligand>
        <name>CTP</name>
        <dbReference type="ChEBI" id="CHEBI:37563"/>
        <note>allosteric inhibitor</note>
    </ligand>
</feature>
<feature type="binding site" evidence="1">
    <location>
        <position position="224"/>
    </location>
    <ligand>
        <name>UTP</name>
        <dbReference type="ChEBI" id="CHEBI:46398"/>
    </ligand>
</feature>
<feature type="binding site" evidence="1">
    <location>
        <position position="354"/>
    </location>
    <ligand>
        <name>L-glutamine</name>
        <dbReference type="ChEBI" id="CHEBI:58359"/>
    </ligand>
</feature>
<feature type="binding site" evidence="1">
    <location>
        <begin position="382"/>
        <end position="385"/>
    </location>
    <ligand>
        <name>L-glutamine</name>
        <dbReference type="ChEBI" id="CHEBI:58359"/>
    </ligand>
</feature>
<feature type="binding site" evidence="1">
    <location>
        <position position="405"/>
    </location>
    <ligand>
        <name>L-glutamine</name>
        <dbReference type="ChEBI" id="CHEBI:58359"/>
    </ligand>
</feature>
<feature type="binding site" evidence="1">
    <location>
        <position position="462"/>
    </location>
    <ligand>
        <name>L-glutamine</name>
        <dbReference type="ChEBI" id="CHEBI:58359"/>
    </ligand>
</feature>
<name>PYRG_SYNP6</name>
<dbReference type="EC" id="6.3.4.2" evidence="1"/>
<dbReference type="EMBL" id="AP008231">
    <property type="protein sequence ID" value="BAD80330.1"/>
    <property type="status" value="ALT_INIT"/>
    <property type="molecule type" value="Genomic_DNA"/>
</dbReference>
<dbReference type="RefSeq" id="WP_011244450.1">
    <property type="nucleotide sequence ID" value="NZ_CP085785.1"/>
</dbReference>
<dbReference type="SMR" id="Q5N040"/>
<dbReference type="MEROPS" id="C26.964"/>
<dbReference type="KEGG" id="syc:syc2140_d"/>
<dbReference type="eggNOG" id="COG0504">
    <property type="taxonomic scope" value="Bacteria"/>
</dbReference>
<dbReference type="UniPathway" id="UPA00159">
    <property type="reaction ID" value="UER00277"/>
</dbReference>
<dbReference type="Proteomes" id="UP000001175">
    <property type="component" value="Chromosome"/>
</dbReference>
<dbReference type="GO" id="GO:0005829">
    <property type="term" value="C:cytosol"/>
    <property type="evidence" value="ECO:0007669"/>
    <property type="project" value="TreeGrafter"/>
</dbReference>
<dbReference type="GO" id="GO:0005524">
    <property type="term" value="F:ATP binding"/>
    <property type="evidence" value="ECO:0007669"/>
    <property type="project" value="UniProtKB-KW"/>
</dbReference>
<dbReference type="GO" id="GO:0003883">
    <property type="term" value="F:CTP synthase activity"/>
    <property type="evidence" value="ECO:0007669"/>
    <property type="project" value="UniProtKB-UniRule"/>
</dbReference>
<dbReference type="GO" id="GO:0004359">
    <property type="term" value="F:glutaminase activity"/>
    <property type="evidence" value="ECO:0007669"/>
    <property type="project" value="RHEA"/>
</dbReference>
<dbReference type="GO" id="GO:0042802">
    <property type="term" value="F:identical protein binding"/>
    <property type="evidence" value="ECO:0007669"/>
    <property type="project" value="TreeGrafter"/>
</dbReference>
<dbReference type="GO" id="GO:0046872">
    <property type="term" value="F:metal ion binding"/>
    <property type="evidence" value="ECO:0007669"/>
    <property type="project" value="UniProtKB-KW"/>
</dbReference>
<dbReference type="GO" id="GO:0044210">
    <property type="term" value="P:'de novo' CTP biosynthetic process"/>
    <property type="evidence" value="ECO:0007669"/>
    <property type="project" value="UniProtKB-UniRule"/>
</dbReference>
<dbReference type="GO" id="GO:0019856">
    <property type="term" value="P:pyrimidine nucleobase biosynthetic process"/>
    <property type="evidence" value="ECO:0007669"/>
    <property type="project" value="TreeGrafter"/>
</dbReference>
<dbReference type="CDD" id="cd03113">
    <property type="entry name" value="CTPS_N"/>
    <property type="match status" value="1"/>
</dbReference>
<dbReference type="CDD" id="cd01746">
    <property type="entry name" value="GATase1_CTP_Synthase"/>
    <property type="match status" value="1"/>
</dbReference>
<dbReference type="FunFam" id="3.40.50.300:FF:000009">
    <property type="entry name" value="CTP synthase"/>
    <property type="match status" value="1"/>
</dbReference>
<dbReference type="FunFam" id="3.40.50.880:FF:000002">
    <property type="entry name" value="CTP synthase"/>
    <property type="match status" value="1"/>
</dbReference>
<dbReference type="Gene3D" id="3.40.50.880">
    <property type="match status" value="1"/>
</dbReference>
<dbReference type="Gene3D" id="3.40.50.300">
    <property type="entry name" value="P-loop containing nucleotide triphosphate hydrolases"/>
    <property type="match status" value="1"/>
</dbReference>
<dbReference type="HAMAP" id="MF_01227">
    <property type="entry name" value="PyrG"/>
    <property type="match status" value="1"/>
</dbReference>
<dbReference type="InterPro" id="IPR029062">
    <property type="entry name" value="Class_I_gatase-like"/>
</dbReference>
<dbReference type="InterPro" id="IPR004468">
    <property type="entry name" value="CTP_synthase"/>
</dbReference>
<dbReference type="InterPro" id="IPR017456">
    <property type="entry name" value="CTP_synthase_N"/>
</dbReference>
<dbReference type="InterPro" id="IPR017926">
    <property type="entry name" value="GATASE"/>
</dbReference>
<dbReference type="InterPro" id="IPR033828">
    <property type="entry name" value="GATase1_CTP_Synthase"/>
</dbReference>
<dbReference type="InterPro" id="IPR027417">
    <property type="entry name" value="P-loop_NTPase"/>
</dbReference>
<dbReference type="NCBIfam" id="NF003792">
    <property type="entry name" value="PRK05380.1"/>
    <property type="match status" value="1"/>
</dbReference>
<dbReference type="NCBIfam" id="TIGR00337">
    <property type="entry name" value="PyrG"/>
    <property type="match status" value="1"/>
</dbReference>
<dbReference type="PANTHER" id="PTHR11550">
    <property type="entry name" value="CTP SYNTHASE"/>
    <property type="match status" value="1"/>
</dbReference>
<dbReference type="PANTHER" id="PTHR11550:SF0">
    <property type="entry name" value="CTP SYNTHASE-RELATED"/>
    <property type="match status" value="1"/>
</dbReference>
<dbReference type="Pfam" id="PF06418">
    <property type="entry name" value="CTP_synth_N"/>
    <property type="match status" value="1"/>
</dbReference>
<dbReference type="Pfam" id="PF00117">
    <property type="entry name" value="GATase"/>
    <property type="match status" value="1"/>
</dbReference>
<dbReference type="SUPFAM" id="SSF52317">
    <property type="entry name" value="Class I glutamine amidotransferase-like"/>
    <property type="match status" value="1"/>
</dbReference>
<dbReference type="SUPFAM" id="SSF52540">
    <property type="entry name" value="P-loop containing nucleoside triphosphate hydrolases"/>
    <property type="match status" value="1"/>
</dbReference>
<dbReference type="PROSITE" id="PS51273">
    <property type="entry name" value="GATASE_TYPE_1"/>
    <property type="match status" value="1"/>
</dbReference>
<reference key="1">
    <citation type="journal article" date="2007" name="Photosyn. Res.">
        <title>Complete nucleotide sequence of the freshwater unicellular cyanobacterium Synechococcus elongatus PCC 6301 chromosome: gene content and organization.</title>
        <authorList>
            <person name="Sugita C."/>
            <person name="Ogata K."/>
            <person name="Shikata M."/>
            <person name="Jikuya H."/>
            <person name="Takano J."/>
            <person name="Furumichi M."/>
            <person name="Kanehisa M."/>
            <person name="Omata T."/>
            <person name="Sugiura M."/>
            <person name="Sugita M."/>
        </authorList>
    </citation>
    <scope>NUCLEOTIDE SEQUENCE [LARGE SCALE GENOMIC DNA]</scope>
    <source>
        <strain>ATCC 27144 / PCC 6301 / SAUG 1402/1</strain>
    </source>
</reference>
<sequence length="546" mass="60260">MTKFIFVTGGVVSSIGKGIVAASLGRLLKSRGYSVSILKLDPYINVDPGTMSPYQHGEVFVTADGAETDLDLGHYERFTDTPMSRLNSVTTGSIYQAVINKERRGDYNGGTVQVIPHITAEIRDRIHRVAQDTHPDVVITEIGGTVGDIESLPFLEAIRQFRKDVGRRDLAYIHVTLVPWIPSAGEMKTKPTQHSVKELRSIGIQPDILVCRCDRPLQAGMKEKMSEFCNVSPEAVITSQDASSIYEVPLMLEREGLAEQVLDILQLEQRQPDLTQWQRWVHQLQNPSRRVEVAIVGKYVRLNDAYLSVSESLRHAAASADADLQLRWVDAEDLENGDPATYLDGVDGIVVPGGFGARGVDGKVAAIQFARDHQIPFLGLCLGMQAAVIDWARNVAGLDGANSAEFDPETPHPVIALLPEQQDVVDLGGTMRLGLCPCKIQSGSLAQRLYGEDIIYERHRHRYEFNNAYRSLFLESGYCVSGTSPDSRLVEIVERPDHPFFIACQFHPEFVSRPNHPHPLFQGLIKAALGSDLTLVDPAPLPAETV</sequence>
<evidence type="ECO:0000255" key="1">
    <source>
        <dbReference type="HAMAP-Rule" id="MF_01227"/>
    </source>
</evidence>
<evidence type="ECO:0000305" key="2"/>
<gene>
    <name evidence="1" type="primary">pyrG</name>
    <name type="ordered locus">syc2140_d</name>
</gene>
<comment type="function">
    <text evidence="1">Catalyzes the ATP-dependent amination of UTP to CTP with either L-glutamine or ammonia as the source of nitrogen. Regulates intracellular CTP levels through interactions with the four ribonucleotide triphosphates.</text>
</comment>
<comment type="catalytic activity">
    <reaction evidence="1">
        <text>UTP + L-glutamine + ATP + H2O = CTP + L-glutamate + ADP + phosphate + 2 H(+)</text>
        <dbReference type="Rhea" id="RHEA:26426"/>
        <dbReference type="ChEBI" id="CHEBI:15377"/>
        <dbReference type="ChEBI" id="CHEBI:15378"/>
        <dbReference type="ChEBI" id="CHEBI:29985"/>
        <dbReference type="ChEBI" id="CHEBI:30616"/>
        <dbReference type="ChEBI" id="CHEBI:37563"/>
        <dbReference type="ChEBI" id="CHEBI:43474"/>
        <dbReference type="ChEBI" id="CHEBI:46398"/>
        <dbReference type="ChEBI" id="CHEBI:58359"/>
        <dbReference type="ChEBI" id="CHEBI:456216"/>
        <dbReference type="EC" id="6.3.4.2"/>
    </reaction>
</comment>
<comment type="catalytic activity">
    <reaction evidence="1">
        <text>L-glutamine + H2O = L-glutamate + NH4(+)</text>
        <dbReference type="Rhea" id="RHEA:15889"/>
        <dbReference type="ChEBI" id="CHEBI:15377"/>
        <dbReference type="ChEBI" id="CHEBI:28938"/>
        <dbReference type="ChEBI" id="CHEBI:29985"/>
        <dbReference type="ChEBI" id="CHEBI:58359"/>
    </reaction>
</comment>
<comment type="catalytic activity">
    <reaction evidence="1">
        <text>UTP + NH4(+) + ATP = CTP + ADP + phosphate + 2 H(+)</text>
        <dbReference type="Rhea" id="RHEA:16597"/>
        <dbReference type="ChEBI" id="CHEBI:15378"/>
        <dbReference type="ChEBI" id="CHEBI:28938"/>
        <dbReference type="ChEBI" id="CHEBI:30616"/>
        <dbReference type="ChEBI" id="CHEBI:37563"/>
        <dbReference type="ChEBI" id="CHEBI:43474"/>
        <dbReference type="ChEBI" id="CHEBI:46398"/>
        <dbReference type="ChEBI" id="CHEBI:456216"/>
    </reaction>
</comment>
<comment type="activity regulation">
    <text evidence="1">Allosterically activated by GTP, when glutamine is the substrate; GTP has no effect on the reaction when ammonia is the substrate. The allosteric effector GTP functions by stabilizing the protein conformation that binds the tetrahedral intermediate(s) formed during glutamine hydrolysis. Inhibited by the product CTP, via allosteric rather than competitive inhibition.</text>
</comment>
<comment type="pathway">
    <text evidence="1">Pyrimidine metabolism; CTP biosynthesis via de novo pathway; CTP from UDP: step 2/2.</text>
</comment>
<comment type="subunit">
    <text evidence="1">Homotetramer.</text>
</comment>
<comment type="miscellaneous">
    <text evidence="1">CTPSs have evolved a hybrid strategy for distinguishing between UTP and CTP. The overlapping regions of the product feedback inhibitory and substrate sites recognize a common feature in both compounds, the triphosphate moiety. To differentiate isosteric substrate and product pyrimidine rings, an additional pocket far from the expected kinase/ligase catalytic site, specifically recognizes the cytosine and ribose portions of the product inhibitor.</text>
</comment>
<comment type="similarity">
    <text evidence="1">Belongs to the CTP synthase family.</text>
</comment>
<comment type="sequence caution" evidence="2">
    <conflict type="erroneous initiation">
        <sequence resource="EMBL-CDS" id="BAD80330"/>
    </conflict>
</comment>
<accession>Q5N040</accession>
<organism>
    <name type="scientific">Synechococcus sp. (strain ATCC 27144 / PCC 6301 / SAUG 1402/1)</name>
    <name type="common">Anacystis nidulans</name>
    <dbReference type="NCBI Taxonomy" id="269084"/>
    <lineage>
        <taxon>Bacteria</taxon>
        <taxon>Bacillati</taxon>
        <taxon>Cyanobacteriota</taxon>
        <taxon>Cyanophyceae</taxon>
        <taxon>Synechococcales</taxon>
        <taxon>Synechococcaceae</taxon>
        <taxon>Synechococcus</taxon>
    </lineage>
</organism>
<keyword id="KW-0067">ATP-binding</keyword>
<keyword id="KW-0315">Glutamine amidotransferase</keyword>
<keyword id="KW-0436">Ligase</keyword>
<keyword id="KW-0460">Magnesium</keyword>
<keyword id="KW-0479">Metal-binding</keyword>
<keyword id="KW-0547">Nucleotide-binding</keyword>
<keyword id="KW-0665">Pyrimidine biosynthesis</keyword>